<organism>
    <name type="scientific">Lactococcus lactis subsp. cremoris (strain MG1363)</name>
    <dbReference type="NCBI Taxonomy" id="416870"/>
    <lineage>
        <taxon>Bacteria</taxon>
        <taxon>Bacillati</taxon>
        <taxon>Bacillota</taxon>
        <taxon>Bacilli</taxon>
        <taxon>Lactobacillales</taxon>
        <taxon>Streptococcaceae</taxon>
        <taxon>Lactococcus</taxon>
        <taxon>Lactococcus cremoris subsp. cremoris</taxon>
    </lineage>
</organism>
<keyword id="KW-0067">ATP-binding</keyword>
<keyword id="KW-0436">Ligase</keyword>
<keyword id="KW-0460">Magnesium</keyword>
<keyword id="KW-0479">Metal-binding</keyword>
<keyword id="KW-0520">NAD</keyword>
<keyword id="KW-0547">Nucleotide-binding</keyword>
<comment type="function">
    <text evidence="1">Catalyzes the ATP-dependent amidation of deamido-NAD to form NAD. Uses ammonia as a nitrogen source.</text>
</comment>
<comment type="catalytic activity">
    <reaction evidence="1">
        <text>deamido-NAD(+) + NH4(+) + ATP = AMP + diphosphate + NAD(+) + H(+)</text>
        <dbReference type="Rhea" id="RHEA:21188"/>
        <dbReference type="ChEBI" id="CHEBI:15378"/>
        <dbReference type="ChEBI" id="CHEBI:28938"/>
        <dbReference type="ChEBI" id="CHEBI:30616"/>
        <dbReference type="ChEBI" id="CHEBI:33019"/>
        <dbReference type="ChEBI" id="CHEBI:57540"/>
        <dbReference type="ChEBI" id="CHEBI:58437"/>
        <dbReference type="ChEBI" id="CHEBI:456215"/>
        <dbReference type="EC" id="6.3.1.5"/>
    </reaction>
</comment>
<comment type="pathway">
    <text evidence="1">Cofactor biosynthesis; NAD(+) biosynthesis; NAD(+) from deamido-NAD(+) (ammonia route): step 1/1.</text>
</comment>
<comment type="subunit">
    <text evidence="1">Homodimer.</text>
</comment>
<comment type="similarity">
    <text evidence="1">Belongs to the NAD synthetase family.</text>
</comment>
<protein>
    <recommendedName>
        <fullName evidence="1">NH(3)-dependent NAD(+) synthetase</fullName>
        <ecNumber evidence="1">6.3.1.5</ecNumber>
    </recommendedName>
</protein>
<dbReference type="EC" id="6.3.1.5" evidence="1"/>
<dbReference type="EMBL" id="AM406671">
    <property type="protein sequence ID" value="CAL98049.1"/>
    <property type="molecule type" value="Genomic_DNA"/>
</dbReference>
<dbReference type="RefSeq" id="WP_011835320.1">
    <property type="nucleotide sequence ID" value="NC_009004.1"/>
</dbReference>
<dbReference type="SMR" id="A2RL82"/>
<dbReference type="STRING" id="416870.llmg_1470"/>
<dbReference type="KEGG" id="llm:llmg_1470"/>
<dbReference type="eggNOG" id="COG0171">
    <property type="taxonomic scope" value="Bacteria"/>
</dbReference>
<dbReference type="HOGENOM" id="CLU_059327_3_0_9"/>
<dbReference type="OrthoDB" id="9803818at2"/>
<dbReference type="PhylomeDB" id="A2RL82"/>
<dbReference type="UniPathway" id="UPA00253">
    <property type="reaction ID" value="UER00333"/>
</dbReference>
<dbReference type="Proteomes" id="UP000000364">
    <property type="component" value="Chromosome"/>
</dbReference>
<dbReference type="GO" id="GO:0005737">
    <property type="term" value="C:cytoplasm"/>
    <property type="evidence" value="ECO:0007669"/>
    <property type="project" value="InterPro"/>
</dbReference>
<dbReference type="GO" id="GO:0005524">
    <property type="term" value="F:ATP binding"/>
    <property type="evidence" value="ECO:0007669"/>
    <property type="project" value="UniProtKB-UniRule"/>
</dbReference>
<dbReference type="GO" id="GO:0004359">
    <property type="term" value="F:glutaminase activity"/>
    <property type="evidence" value="ECO:0007669"/>
    <property type="project" value="InterPro"/>
</dbReference>
<dbReference type="GO" id="GO:0046872">
    <property type="term" value="F:metal ion binding"/>
    <property type="evidence" value="ECO:0007669"/>
    <property type="project" value="UniProtKB-KW"/>
</dbReference>
<dbReference type="GO" id="GO:0003952">
    <property type="term" value="F:NAD+ synthase (glutamine-hydrolyzing) activity"/>
    <property type="evidence" value="ECO:0007669"/>
    <property type="project" value="InterPro"/>
</dbReference>
<dbReference type="GO" id="GO:0008795">
    <property type="term" value="F:NAD+ synthase activity"/>
    <property type="evidence" value="ECO:0007669"/>
    <property type="project" value="UniProtKB-UniRule"/>
</dbReference>
<dbReference type="GO" id="GO:0009435">
    <property type="term" value="P:NAD biosynthetic process"/>
    <property type="evidence" value="ECO:0007669"/>
    <property type="project" value="UniProtKB-UniRule"/>
</dbReference>
<dbReference type="CDD" id="cd00553">
    <property type="entry name" value="NAD_synthase"/>
    <property type="match status" value="1"/>
</dbReference>
<dbReference type="FunFam" id="3.40.50.620:FF:000015">
    <property type="entry name" value="NH(3)-dependent NAD(+) synthetase"/>
    <property type="match status" value="1"/>
</dbReference>
<dbReference type="Gene3D" id="3.40.50.620">
    <property type="entry name" value="HUPs"/>
    <property type="match status" value="1"/>
</dbReference>
<dbReference type="HAMAP" id="MF_00193">
    <property type="entry name" value="NadE_ammonia_dep"/>
    <property type="match status" value="1"/>
</dbReference>
<dbReference type="InterPro" id="IPR022310">
    <property type="entry name" value="NAD/GMP_synthase"/>
</dbReference>
<dbReference type="InterPro" id="IPR003694">
    <property type="entry name" value="NAD_synthase"/>
</dbReference>
<dbReference type="InterPro" id="IPR022926">
    <property type="entry name" value="NH(3)-dep_NAD(+)_synth"/>
</dbReference>
<dbReference type="InterPro" id="IPR014729">
    <property type="entry name" value="Rossmann-like_a/b/a_fold"/>
</dbReference>
<dbReference type="NCBIfam" id="TIGR00552">
    <property type="entry name" value="nadE"/>
    <property type="match status" value="1"/>
</dbReference>
<dbReference type="NCBIfam" id="NF001979">
    <property type="entry name" value="PRK00768.1"/>
    <property type="match status" value="1"/>
</dbReference>
<dbReference type="PANTHER" id="PTHR23090">
    <property type="entry name" value="NH 3 /GLUTAMINE-DEPENDENT NAD + SYNTHETASE"/>
    <property type="match status" value="1"/>
</dbReference>
<dbReference type="PANTHER" id="PTHR23090:SF7">
    <property type="entry name" value="NH(3)-DEPENDENT NAD(+) SYNTHETASE"/>
    <property type="match status" value="1"/>
</dbReference>
<dbReference type="Pfam" id="PF02540">
    <property type="entry name" value="NAD_synthase"/>
    <property type="match status" value="1"/>
</dbReference>
<dbReference type="SUPFAM" id="SSF52402">
    <property type="entry name" value="Adenine nucleotide alpha hydrolases-like"/>
    <property type="match status" value="1"/>
</dbReference>
<sequence>MTLQEEIIKELGVKPIIDPKEEIRVSVDFLKDYLKKYPFIKSFVLGISGGQDSSLAGRLAQIAIEEMRQETADASYKFVAVRLPFGVQADEEDAQRALAFIKPDVSLAVNIKAAVEGQVAALNEAGVEVSDFNKGNIKARQRMITQYAVAGQYQGAVLGTDHAAENITGFFTKFGDGGADLLPLFRLNKRQGKALLAELGADPAIYEKVPTADLEEGKPGLADEIALGVTYNDIDDYTEGKVISDDAKAKIEAWWNKTQHKRHLPISIFDDFWK</sequence>
<proteinExistence type="inferred from homology"/>
<gene>
    <name evidence="1" type="primary">nadE</name>
    <name type="ordered locus">llmg_1470</name>
</gene>
<name>NADE_LACLM</name>
<reference key="1">
    <citation type="journal article" date="2007" name="J. Bacteriol.">
        <title>The complete genome sequence of the lactic acid bacterial paradigm Lactococcus lactis subsp. cremoris MG1363.</title>
        <authorList>
            <person name="Wegmann U."/>
            <person name="O'Connell-Motherway M."/>
            <person name="Zomer A."/>
            <person name="Buist G."/>
            <person name="Shearman C."/>
            <person name="Canchaya C."/>
            <person name="Ventura M."/>
            <person name="Goesmann A."/>
            <person name="Gasson M.J."/>
            <person name="Kuipers O.P."/>
            <person name="van Sinderen D."/>
            <person name="Kok J."/>
        </authorList>
    </citation>
    <scope>NUCLEOTIDE SEQUENCE [LARGE SCALE GENOMIC DNA]</scope>
    <source>
        <strain>MG1363</strain>
    </source>
</reference>
<feature type="chain" id="PRO_1000077566" description="NH(3)-dependent NAD(+) synthetase">
    <location>
        <begin position="1"/>
        <end position="274"/>
    </location>
</feature>
<feature type="binding site" evidence="1">
    <location>
        <begin position="46"/>
        <end position="53"/>
    </location>
    <ligand>
        <name>ATP</name>
        <dbReference type="ChEBI" id="CHEBI:30616"/>
    </ligand>
</feature>
<feature type="binding site" evidence="1">
    <location>
        <position position="52"/>
    </location>
    <ligand>
        <name>Mg(2+)</name>
        <dbReference type="ChEBI" id="CHEBI:18420"/>
    </ligand>
</feature>
<feature type="binding site" evidence="1">
    <location>
        <position position="140"/>
    </location>
    <ligand>
        <name>deamido-NAD(+)</name>
        <dbReference type="ChEBI" id="CHEBI:58437"/>
    </ligand>
</feature>
<feature type="binding site" evidence="1">
    <location>
        <position position="160"/>
    </location>
    <ligand>
        <name>ATP</name>
        <dbReference type="ChEBI" id="CHEBI:30616"/>
    </ligand>
</feature>
<feature type="binding site" evidence="1">
    <location>
        <position position="165"/>
    </location>
    <ligand>
        <name>Mg(2+)</name>
        <dbReference type="ChEBI" id="CHEBI:18420"/>
    </ligand>
</feature>
<feature type="binding site" evidence="1">
    <location>
        <position position="173"/>
    </location>
    <ligand>
        <name>deamido-NAD(+)</name>
        <dbReference type="ChEBI" id="CHEBI:58437"/>
    </ligand>
</feature>
<feature type="binding site" evidence="1">
    <location>
        <position position="180"/>
    </location>
    <ligand>
        <name>deamido-NAD(+)</name>
        <dbReference type="ChEBI" id="CHEBI:58437"/>
    </ligand>
</feature>
<feature type="binding site" evidence="1">
    <location>
        <position position="189"/>
    </location>
    <ligand>
        <name>ATP</name>
        <dbReference type="ChEBI" id="CHEBI:30616"/>
    </ligand>
</feature>
<feature type="binding site" evidence="1">
    <location>
        <position position="211"/>
    </location>
    <ligand>
        <name>ATP</name>
        <dbReference type="ChEBI" id="CHEBI:30616"/>
    </ligand>
</feature>
<feature type="binding site" evidence="1">
    <location>
        <begin position="260"/>
        <end position="261"/>
    </location>
    <ligand>
        <name>deamido-NAD(+)</name>
        <dbReference type="ChEBI" id="CHEBI:58437"/>
    </ligand>
</feature>
<evidence type="ECO:0000255" key="1">
    <source>
        <dbReference type="HAMAP-Rule" id="MF_00193"/>
    </source>
</evidence>
<accession>A2RL82</accession>